<dbReference type="EMBL" id="AB070066">
    <property type="protein sequence ID" value="BAB63011.1"/>
    <property type="molecule type" value="mRNA"/>
</dbReference>
<dbReference type="EMBL" id="AB070052">
    <property type="protein sequence ID" value="BAB62997.1"/>
    <property type="status" value="ALT_INIT"/>
    <property type="molecule type" value="mRNA"/>
</dbReference>
<dbReference type="RefSeq" id="NP_001274644.1">
    <property type="nucleotide sequence ID" value="NM_001287715.1"/>
</dbReference>
<dbReference type="RefSeq" id="XP_065376145.1">
    <property type="nucleotide sequence ID" value="XM_065520073.1"/>
</dbReference>
<dbReference type="SMR" id="Q95JW2"/>
<dbReference type="STRING" id="9541.ENSMFAP00000037933"/>
<dbReference type="GlyCosmos" id="Q95JW2">
    <property type="glycosylation" value="3 sites, No reported glycans"/>
</dbReference>
<dbReference type="Ensembl" id="ENSMFAT00000012221.2">
    <property type="protein sequence ID" value="ENSMFAP00000037969.1"/>
    <property type="gene ID" value="ENSMFAG00000038111.2"/>
</dbReference>
<dbReference type="GeneID" id="102128358"/>
<dbReference type="VEuPathDB" id="HostDB:ENSMFAG00000038111"/>
<dbReference type="eggNOG" id="KOG1362">
    <property type="taxonomic scope" value="Eukaryota"/>
</dbReference>
<dbReference type="GeneTree" id="ENSGT00940000156600"/>
<dbReference type="Proteomes" id="UP000233100">
    <property type="component" value="Chromosome 1"/>
</dbReference>
<dbReference type="Bgee" id="ENSMFAG00000038111">
    <property type="expression patterns" value="Expressed in temporal lobe and 9 other cell types or tissues"/>
</dbReference>
<dbReference type="GO" id="GO:0005886">
    <property type="term" value="C:plasma membrane"/>
    <property type="evidence" value="ECO:0007669"/>
    <property type="project" value="UniProtKB-SubCell"/>
</dbReference>
<dbReference type="GO" id="GO:0015297">
    <property type="term" value="F:antiporter activity"/>
    <property type="evidence" value="ECO:0007669"/>
    <property type="project" value="UniProtKB-KW"/>
</dbReference>
<dbReference type="GO" id="GO:0015220">
    <property type="term" value="F:choline transmembrane transporter activity"/>
    <property type="evidence" value="ECO:0007669"/>
    <property type="project" value="Ensembl"/>
</dbReference>
<dbReference type="GO" id="GO:0006656">
    <property type="term" value="P:phosphatidylcholine biosynthetic process"/>
    <property type="evidence" value="ECO:0007669"/>
    <property type="project" value="UniProtKB-ARBA"/>
</dbReference>
<dbReference type="InterPro" id="IPR007603">
    <property type="entry name" value="Choline_transptr-like"/>
</dbReference>
<dbReference type="PANTHER" id="PTHR12385">
    <property type="entry name" value="CHOLINE TRANSPORTER-LIKE (SLC FAMILY 44)"/>
    <property type="match status" value="1"/>
</dbReference>
<dbReference type="PANTHER" id="PTHR12385:SF42">
    <property type="entry name" value="CHOLINE TRANSPORTER-LIKE PROTEIN 5"/>
    <property type="match status" value="1"/>
</dbReference>
<dbReference type="Pfam" id="PF04515">
    <property type="entry name" value="Choline_transpo"/>
    <property type="match status" value="1"/>
</dbReference>
<name>CTL5_MACFA</name>
<gene>
    <name type="primary">SLC44A5</name>
    <name type="synonym">CTL5</name>
    <name type="ORF">QtsA-10162</name>
    <name type="ORF">QtsA-12677</name>
</gene>
<evidence type="ECO:0000250" key="1">
    <source>
        <dbReference type="UniProtKB" id="Q8NCS7"/>
    </source>
</evidence>
<evidence type="ECO:0000255" key="2"/>
<evidence type="ECO:0000256" key="3">
    <source>
        <dbReference type="SAM" id="MobiDB-lite"/>
    </source>
</evidence>
<evidence type="ECO:0000305" key="4"/>
<keyword id="KW-0050">Antiport</keyword>
<keyword id="KW-1003">Cell membrane</keyword>
<keyword id="KW-0325">Glycoprotein</keyword>
<keyword id="KW-0472">Membrane</keyword>
<keyword id="KW-1185">Reference proteome</keyword>
<keyword id="KW-0812">Transmembrane</keyword>
<keyword id="KW-1133">Transmembrane helix</keyword>
<keyword id="KW-0813">Transport</keyword>
<feature type="chain" id="PRO_0000191727" description="Choline transporter-like protein 5">
    <location>
        <begin position="1"/>
        <end position="717"/>
    </location>
</feature>
<feature type="topological domain" description="Cytoplasmic" evidence="2">
    <location>
        <begin position="1"/>
        <end position="38"/>
    </location>
</feature>
<feature type="transmembrane region" description="Helical" evidence="2">
    <location>
        <begin position="39"/>
        <end position="59"/>
    </location>
</feature>
<feature type="topological domain" description="Extracellular" evidence="2">
    <location>
        <begin position="60"/>
        <end position="242"/>
    </location>
</feature>
<feature type="transmembrane region" description="Helical" evidence="2">
    <location>
        <begin position="243"/>
        <end position="263"/>
    </location>
</feature>
<feature type="topological domain" description="Cytoplasmic" evidence="2">
    <location>
        <begin position="264"/>
        <end position="265"/>
    </location>
</feature>
<feature type="transmembrane region" description="Helical" evidence="2">
    <location>
        <begin position="266"/>
        <end position="286"/>
    </location>
</feature>
<feature type="topological domain" description="Extracellular" evidence="2">
    <location>
        <begin position="287"/>
        <end position="325"/>
    </location>
</feature>
<feature type="transmembrane region" description="Helical" evidence="2">
    <location>
        <begin position="326"/>
        <end position="346"/>
    </location>
</feature>
<feature type="topological domain" description="Cytoplasmic" evidence="2">
    <location>
        <begin position="347"/>
        <end position="351"/>
    </location>
</feature>
<feature type="transmembrane region" description="Helical" evidence="2">
    <location>
        <begin position="352"/>
        <end position="372"/>
    </location>
</feature>
<feature type="topological domain" description="Extracellular" evidence="2">
    <location>
        <begin position="373"/>
        <end position="374"/>
    </location>
</feature>
<feature type="transmembrane region" description="Helical" evidence="2">
    <location>
        <begin position="375"/>
        <end position="395"/>
    </location>
</feature>
<feature type="topological domain" description="Cytoplasmic" evidence="2">
    <location>
        <begin position="396"/>
        <end position="460"/>
    </location>
</feature>
<feature type="transmembrane region" description="Helical" evidence="2">
    <location>
        <begin position="461"/>
        <end position="481"/>
    </location>
</feature>
<feature type="topological domain" description="Extracellular" evidence="2">
    <location>
        <begin position="482"/>
        <end position="515"/>
    </location>
</feature>
<feature type="transmembrane region" description="Helical" evidence="2">
    <location>
        <begin position="516"/>
        <end position="536"/>
    </location>
</feature>
<feature type="topological domain" description="Cytoplasmic" evidence="2">
    <location>
        <begin position="537"/>
        <end position="610"/>
    </location>
</feature>
<feature type="transmembrane region" description="Helical" evidence="2">
    <location>
        <begin position="611"/>
        <end position="631"/>
    </location>
</feature>
<feature type="topological domain" description="Extracellular" evidence="2">
    <location>
        <begin position="632"/>
        <end position="649"/>
    </location>
</feature>
<feature type="transmembrane region" description="Helical" evidence="2">
    <location>
        <begin position="650"/>
        <end position="670"/>
    </location>
</feature>
<feature type="topological domain" description="Cytoplasmic" evidence="2">
    <location>
        <begin position="671"/>
        <end position="717"/>
    </location>
</feature>
<feature type="region of interest" description="Disordered" evidence="3">
    <location>
        <begin position="1"/>
        <end position="24"/>
    </location>
</feature>
<feature type="glycosylation site" description="N-linked (GlcNAc...) asparagine" evidence="2">
    <location>
        <position position="88"/>
    </location>
</feature>
<feature type="glycosylation site" description="N-linked (GlcNAc...) asparagine" evidence="2">
    <location>
        <position position="190"/>
    </location>
</feature>
<feature type="glycosylation site" description="N-linked (GlcNAc...) asparagine" evidence="2">
    <location>
        <position position="314"/>
    </location>
</feature>
<feature type="sequence conflict" description="In Ref. 1; BAB62997." evidence="4" ref="1">
    <original>W</original>
    <variation>R</variation>
    <location>
        <position position="287"/>
    </location>
</feature>
<feature type="sequence conflict" description="In Ref. 1; BAB62997." evidence="4" ref="1">
    <original>N</original>
    <variation>S</variation>
    <location>
        <position position="583"/>
    </location>
</feature>
<protein>
    <recommendedName>
        <fullName>Choline transporter-like protein 5</fullName>
    </recommendedName>
    <alternativeName>
        <fullName>Solute carrier family 44 member 5</fullName>
    </alternativeName>
</protein>
<organism>
    <name type="scientific">Macaca fascicularis</name>
    <name type="common">Crab-eating macaque</name>
    <name type="synonym">Cynomolgus monkey</name>
    <dbReference type="NCBI Taxonomy" id="9541"/>
    <lineage>
        <taxon>Eukaryota</taxon>
        <taxon>Metazoa</taxon>
        <taxon>Chordata</taxon>
        <taxon>Craniata</taxon>
        <taxon>Vertebrata</taxon>
        <taxon>Euteleostomi</taxon>
        <taxon>Mammalia</taxon>
        <taxon>Eutheria</taxon>
        <taxon>Euarchontoglires</taxon>
        <taxon>Primates</taxon>
        <taxon>Haplorrhini</taxon>
        <taxon>Catarrhini</taxon>
        <taxon>Cercopithecidae</taxon>
        <taxon>Cercopithecinae</taxon>
        <taxon>Macaca</taxon>
    </lineage>
</organism>
<sequence length="717" mass="81580">MNDTEKPADTASEEEDFGDPRTYDPDFKGPVSNRSCTDVLCCMIFLLCIVGYIVLGLVAWVHGDPRRAAYPTDSQGHFCGQKGTPNENKTILFYFNLLRCTSPSVLLNLQCPTTQICVSKCPEKFLTYVEMQLLYTKDKSHWEDYRQFCKTTAKPVKSLTQLLLDDDCPTAIFPSKPFLQRCFPDFSTKNGTLTIGSQIVFQDGNGGTRSVIELRDAANGINKLLDAKSLGLKVFEDYATTWYWILIGLMIAMVLSWIFLILLRFIAGCLFWVFMIGVIGIIGYGIWHCYQQYTNLQEHPRSVLTVYDIGIQTNISMYFELQQTWFTLMIILCIIEVIVILMLIFLRNRIRVAIILLKEGSKAIGYVPSTLVYPALTFILLSICICYWVVTAVFLATSGVPVYKVIAPEGHCIHENQTCDPEIFNTTEIAKACPGALCNFAFYGGKSLYHQYIPTFHVYNLFVFLWLINFVIALGQCALAGAFATYYWAMKKPDDIPRYPLFTAFGRAIRYHTGSLAFGSLIIALIQMFKIVLEYLNHRLKRTENTLSKFLQCCLRCCFWCLENAIKFLNRNAYIMIAIYGRNFCRSAKDAFNLLMRNVLKVAVTDEVTYFVLFLGKILVAGSIGVLAFLFFTQRLPVIAQGPASLNYYWVPLLTVILGSYLIAHGFFSVYAMCVETIFICFLEDLERNDGSTARPYYVSQPLLKIFQEENLQTKQQ</sequence>
<proteinExistence type="evidence at transcript level"/>
<reference key="1">
    <citation type="journal article" date="2002" name="BMC Genomics">
        <title>Cynomolgus monkey testicular cDNAs for discovery of novel human genes in the human genome sequence.</title>
        <authorList>
            <person name="Osada N."/>
            <person name="Hida M."/>
            <person name="Kusuda J."/>
            <person name="Tanuma R."/>
            <person name="Hirata M."/>
            <person name="Suto Y."/>
            <person name="Hirai M."/>
            <person name="Terao K."/>
            <person name="Sugano S."/>
            <person name="Hashimoto K."/>
        </authorList>
    </citation>
    <scope>NUCLEOTIDE SEQUENCE [LARGE SCALE MRNA]</scope>
    <source>
        <tissue>Testis</tissue>
    </source>
</reference>
<comment type="function">
    <text evidence="1">Choline/H+ antiporter.</text>
</comment>
<comment type="catalytic activity">
    <reaction evidence="1">
        <text>choline(out) + n H(+)(in) = choline(in) + n H(+)(out)</text>
        <dbReference type="Rhea" id="RHEA:75463"/>
        <dbReference type="ChEBI" id="CHEBI:15354"/>
        <dbReference type="ChEBI" id="CHEBI:15378"/>
    </reaction>
</comment>
<comment type="subcellular location">
    <subcellularLocation>
        <location evidence="1">Cell membrane</location>
        <topology evidence="2">Multi-pass membrane protein</topology>
    </subcellularLocation>
</comment>
<comment type="similarity">
    <text evidence="4">Belongs to the CTL (choline transporter-like) family.</text>
</comment>
<comment type="sequence caution" evidence="4">
    <conflict type="erroneous initiation">
        <sequence resource="EMBL-CDS" id="BAB62997"/>
    </conflict>
    <text>Truncated N-terminus.</text>
</comment>
<accession>Q95JW2</accession>
<accession>Q95JX5</accession>